<sequence>MAGRGGAARPNGPAAGNKICQFKLVLLGESAVGKSSLVLRFVKGQFHEYQESTIGAAFLTQTVCLDDTTVKFEIWDTAGQERYHSLAPMYYRGAQAAIVVYDITNTDTFARAKNWVKELQRQASPNIVIALAGNKADLASKRAVEFQEAQAYADDNSLLFMETSAKTAMNVNEIFMAIAKKLPKNEPQNAAGAPSRNRGVDLQENSPASRSQCCSN</sequence>
<reference key="1">
    <citation type="journal article" date="1995" name="FEBS Lett.">
        <title>Co-operative regulation of endocytosis by three Rab5 isoforms.</title>
        <authorList>
            <person name="Bucci C."/>
            <person name="Lutcke A."/>
            <person name="Steele Mortimer O."/>
            <person name="Olkkonen V.M."/>
            <person name="Dupree P."/>
            <person name="Chiariello M."/>
            <person name="Bruni C.B."/>
            <person name="Simons K."/>
            <person name="Zerial M."/>
        </authorList>
    </citation>
    <scope>NUCLEOTIDE SEQUENCE [MRNA]</scope>
</reference>
<keyword id="KW-1003">Cell membrane</keyword>
<keyword id="KW-0967">Endosome</keyword>
<keyword id="KW-0342">GTP-binding</keyword>
<keyword id="KW-0378">Hydrolase</keyword>
<keyword id="KW-0449">Lipoprotein</keyword>
<keyword id="KW-0460">Magnesium</keyword>
<keyword id="KW-0472">Membrane</keyword>
<keyword id="KW-0479">Metal-binding</keyword>
<keyword id="KW-0547">Nucleotide-binding</keyword>
<keyword id="KW-0597">Phosphoprotein</keyword>
<keyword id="KW-0636">Prenylation</keyword>
<keyword id="KW-0653">Protein transport</keyword>
<keyword id="KW-1185">Reference proteome</keyword>
<keyword id="KW-0813">Transport</keyword>
<organism>
    <name type="scientific">Canis lupus familiaris</name>
    <name type="common">Dog</name>
    <name type="synonym">Canis familiaris</name>
    <dbReference type="NCBI Taxonomy" id="9615"/>
    <lineage>
        <taxon>Eukaryota</taxon>
        <taxon>Metazoa</taxon>
        <taxon>Chordata</taxon>
        <taxon>Craniata</taxon>
        <taxon>Vertebrata</taxon>
        <taxon>Euteleostomi</taxon>
        <taxon>Mammalia</taxon>
        <taxon>Eutheria</taxon>
        <taxon>Laurasiatheria</taxon>
        <taxon>Carnivora</taxon>
        <taxon>Caniformia</taxon>
        <taxon>Canidae</taxon>
        <taxon>Canis</taxon>
    </lineage>
</organism>
<dbReference type="EC" id="3.6.5.2" evidence="1"/>
<dbReference type="EMBL" id="Z27110">
    <property type="protein sequence ID" value="CAA81626.1"/>
    <property type="molecule type" value="mRNA"/>
</dbReference>
<dbReference type="PIR" id="S65933">
    <property type="entry name" value="S65933"/>
</dbReference>
<dbReference type="RefSeq" id="NP_001003261.1">
    <property type="nucleotide sequence ID" value="NM_001003261.2"/>
</dbReference>
<dbReference type="RefSeq" id="XP_005624384.1">
    <property type="nucleotide sequence ID" value="XM_005624327.2"/>
</dbReference>
<dbReference type="RefSeq" id="XP_013971941.1">
    <property type="nucleotide sequence ID" value="XM_014116466.1"/>
</dbReference>
<dbReference type="RefSeq" id="XP_038530895.1">
    <property type="nucleotide sequence ID" value="XM_038674967.1"/>
</dbReference>
<dbReference type="RefSeq" id="XP_038530896.1">
    <property type="nucleotide sequence ID" value="XM_038674968.1"/>
</dbReference>
<dbReference type="SMR" id="P51147"/>
<dbReference type="FunCoup" id="P51147">
    <property type="interactions" value="3509"/>
</dbReference>
<dbReference type="STRING" id="9615.ENSCAFP00000022977"/>
<dbReference type="SwissPalm" id="P51147"/>
<dbReference type="PaxDb" id="9612-ENSCAFP00000022977"/>
<dbReference type="Ensembl" id="ENSCAFT00000024768.4">
    <property type="protein sequence ID" value="ENSCAFP00000022977.2"/>
    <property type="gene ID" value="ENSCAFG00000015629.4"/>
</dbReference>
<dbReference type="Ensembl" id="ENSCAFT00030000322.1">
    <property type="protein sequence ID" value="ENSCAFP00030000278.1"/>
    <property type="gene ID" value="ENSCAFG00030000204.1"/>
</dbReference>
<dbReference type="Ensembl" id="ENSCAFT00040016248.1">
    <property type="protein sequence ID" value="ENSCAFP00040014080.1"/>
    <property type="gene ID" value="ENSCAFG00040008714.1"/>
</dbReference>
<dbReference type="Ensembl" id="ENSCAFT00845018023.1">
    <property type="protein sequence ID" value="ENSCAFP00845014042.1"/>
    <property type="gene ID" value="ENSCAFG00845010240.1"/>
</dbReference>
<dbReference type="GeneID" id="403941"/>
<dbReference type="KEGG" id="cfa:403941"/>
<dbReference type="CTD" id="5878"/>
<dbReference type="VEuPathDB" id="HostDB:ENSCAFG00845010240"/>
<dbReference type="VGNC" id="VGNC:55798">
    <property type="gene designation" value="RAB5C"/>
</dbReference>
<dbReference type="eggNOG" id="KOG0092">
    <property type="taxonomic scope" value="Eukaryota"/>
</dbReference>
<dbReference type="GeneTree" id="ENSGT00940000154971"/>
<dbReference type="HOGENOM" id="CLU_041217_10_2_1"/>
<dbReference type="InParanoid" id="P51147"/>
<dbReference type="OMA" id="GGPNKTC"/>
<dbReference type="OrthoDB" id="63533at2759"/>
<dbReference type="TreeFam" id="TF300199"/>
<dbReference type="Reactome" id="R-CFA-432722">
    <property type="pathway name" value="Golgi Associated Vesicle Biogenesis"/>
</dbReference>
<dbReference type="Reactome" id="R-CFA-6798695">
    <property type="pathway name" value="Neutrophil degranulation"/>
</dbReference>
<dbReference type="Reactome" id="R-CFA-8856828">
    <property type="pathway name" value="Clathrin-mediated endocytosis"/>
</dbReference>
<dbReference type="Reactome" id="R-CFA-8873719">
    <property type="pathway name" value="RAB geranylgeranylation"/>
</dbReference>
<dbReference type="Reactome" id="R-CFA-8876198">
    <property type="pathway name" value="RAB GEFs exchange GTP for GDP on RABs"/>
</dbReference>
<dbReference type="Proteomes" id="UP000002254">
    <property type="component" value="Chromosome 9"/>
</dbReference>
<dbReference type="Proteomes" id="UP000694429">
    <property type="component" value="Chromosome 9"/>
</dbReference>
<dbReference type="Proteomes" id="UP000694542">
    <property type="component" value="Chromosome 9"/>
</dbReference>
<dbReference type="Proteomes" id="UP000805418">
    <property type="component" value="Chromosome 9"/>
</dbReference>
<dbReference type="Bgee" id="ENSCAFG00000015629">
    <property type="expression patterns" value="Expressed in granulocyte and 46 other cell types or tissues"/>
</dbReference>
<dbReference type="GO" id="GO:0005769">
    <property type="term" value="C:early endosome"/>
    <property type="evidence" value="ECO:0000318"/>
    <property type="project" value="GO_Central"/>
</dbReference>
<dbReference type="GO" id="GO:0031901">
    <property type="term" value="C:early endosome membrane"/>
    <property type="evidence" value="ECO:0007669"/>
    <property type="project" value="UniProtKB-SubCell"/>
</dbReference>
<dbReference type="GO" id="GO:0030139">
    <property type="term" value="C:endocytic vesicle"/>
    <property type="evidence" value="ECO:0000318"/>
    <property type="project" value="GO_Central"/>
</dbReference>
<dbReference type="GO" id="GO:0012505">
    <property type="term" value="C:endomembrane system"/>
    <property type="evidence" value="ECO:0000318"/>
    <property type="project" value="GO_Central"/>
</dbReference>
<dbReference type="GO" id="GO:0070382">
    <property type="term" value="C:exocytic vesicle"/>
    <property type="evidence" value="ECO:0000314"/>
    <property type="project" value="CAFA"/>
</dbReference>
<dbReference type="GO" id="GO:0005811">
    <property type="term" value="C:lipid droplet"/>
    <property type="evidence" value="ECO:0007669"/>
    <property type="project" value="Ensembl"/>
</dbReference>
<dbReference type="GO" id="GO:0042470">
    <property type="term" value="C:melanosome"/>
    <property type="evidence" value="ECO:0007669"/>
    <property type="project" value="UniProtKB-SubCell"/>
</dbReference>
<dbReference type="GO" id="GO:0005886">
    <property type="term" value="C:plasma membrane"/>
    <property type="evidence" value="ECO:0000318"/>
    <property type="project" value="GO_Central"/>
</dbReference>
<dbReference type="GO" id="GO:0003925">
    <property type="term" value="F:G protein activity"/>
    <property type="evidence" value="ECO:0007669"/>
    <property type="project" value="UniProtKB-EC"/>
</dbReference>
<dbReference type="GO" id="GO:0019003">
    <property type="term" value="F:GDP binding"/>
    <property type="evidence" value="ECO:0000250"/>
    <property type="project" value="UniProtKB"/>
</dbReference>
<dbReference type="GO" id="GO:0005525">
    <property type="term" value="F:GTP binding"/>
    <property type="evidence" value="ECO:0007669"/>
    <property type="project" value="UniProtKB-KW"/>
</dbReference>
<dbReference type="GO" id="GO:0003924">
    <property type="term" value="F:GTPase activity"/>
    <property type="evidence" value="ECO:0000318"/>
    <property type="project" value="GO_Central"/>
</dbReference>
<dbReference type="GO" id="GO:0006897">
    <property type="term" value="P:endocytosis"/>
    <property type="evidence" value="ECO:0000318"/>
    <property type="project" value="GO_Central"/>
</dbReference>
<dbReference type="GO" id="GO:0007032">
    <property type="term" value="P:endosome organization"/>
    <property type="evidence" value="ECO:0007669"/>
    <property type="project" value="Ensembl"/>
</dbReference>
<dbReference type="GO" id="GO:0006886">
    <property type="term" value="P:intracellular protein transport"/>
    <property type="evidence" value="ECO:0000318"/>
    <property type="project" value="GO_Central"/>
</dbReference>
<dbReference type="GO" id="GO:0048227">
    <property type="term" value="P:plasma membrane to endosome transport"/>
    <property type="evidence" value="ECO:0007669"/>
    <property type="project" value="Ensembl"/>
</dbReference>
<dbReference type="GO" id="GO:0030100">
    <property type="term" value="P:regulation of endocytosis"/>
    <property type="evidence" value="ECO:0007669"/>
    <property type="project" value="Ensembl"/>
</dbReference>
<dbReference type="CDD" id="cd01860">
    <property type="entry name" value="Rab5_related"/>
    <property type="match status" value="1"/>
</dbReference>
<dbReference type="FunFam" id="3.40.50.300:FF:000180">
    <property type="entry name" value="Member RAS oncogene family"/>
    <property type="match status" value="1"/>
</dbReference>
<dbReference type="Gene3D" id="3.40.50.300">
    <property type="entry name" value="P-loop containing nucleotide triphosphate hydrolases"/>
    <property type="match status" value="1"/>
</dbReference>
<dbReference type="InterPro" id="IPR027417">
    <property type="entry name" value="P-loop_NTPase"/>
</dbReference>
<dbReference type="InterPro" id="IPR005225">
    <property type="entry name" value="Small_GTP-bd"/>
</dbReference>
<dbReference type="InterPro" id="IPR001806">
    <property type="entry name" value="Small_GTPase"/>
</dbReference>
<dbReference type="NCBIfam" id="TIGR00231">
    <property type="entry name" value="small_GTP"/>
    <property type="match status" value="1"/>
</dbReference>
<dbReference type="PANTHER" id="PTHR47978">
    <property type="match status" value="1"/>
</dbReference>
<dbReference type="Pfam" id="PF00071">
    <property type="entry name" value="Ras"/>
    <property type="match status" value="1"/>
</dbReference>
<dbReference type="PRINTS" id="PR00449">
    <property type="entry name" value="RASTRNSFRMNG"/>
</dbReference>
<dbReference type="SMART" id="SM00175">
    <property type="entry name" value="RAB"/>
    <property type="match status" value="1"/>
</dbReference>
<dbReference type="SMART" id="SM00176">
    <property type="entry name" value="RAN"/>
    <property type="match status" value="1"/>
</dbReference>
<dbReference type="SMART" id="SM00173">
    <property type="entry name" value="RAS"/>
    <property type="match status" value="1"/>
</dbReference>
<dbReference type="SMART" id="SM00174">
    <property type="entry name" value="RHO"/>
    <property type="match status" value="1"/>
</dbReference>
<dbReference type="SUPFAM" id="SSF52540">
    <property type="entry name" value="P-loop containing nucleoside triphosphate hydrolases"/>
    <property type="match status" value="1"/>
</dbReference>
<dbReference type="PROSITE" id="PS51419">
    <property type="entry name" value="RAB"/>
    <property type="match status" value="1"/>
</dbReference>
<accession>P51147</accession>
<name>RAB5C_CANLF</name>
<feature type="chain" id="PRO_0000121109" description="Ras-related protein Rab-5C">
    <location>
        <begin position="1"/>
        <end position="216"/>
    </location>
</feature>
<feature type="region of interest" description="Disordered" evidence="3">
    <location>
        <begin position="185"/>
        <end position="216"/>
    </location>
</feature>
<feature type="short sequence motif" description="Switch 1" evidence="1">
    <location>
        <begin position="45"/>
        <end position="57"/>
    </location>
</feature>
<feature type="short sequence motif" description="Switch 2" evidence="1">
    <location>
        <begin position="78"/>
        <end position="94"/>
    </location>
</feature>
<feature type="compositionally biased region" description="Polar residues" evidence="3">
    <location>
        <begin position="203"/>
        <end position="216"/>
    </location>
</feature>
<feature type="binding site" evidence="1">
    <location>
        <position position="30"/>
    </location>
    <ligand>
        <name>GTP</name>
        <dbReference type="ChEBI" id="CHEBI:37565"/>
    </ligand>
</feature>
<feature type="binding site" evidence="1">
    <location>
        <position position="31"/>
    </location>
    <ligand>
        <name>GTP</name>
        <dbReference type="ChEBI" id="CHEBI:37565"/>
    </ligand>
</feature>
<feature type="binding site" evidence="1">
    <location>
        <position position="33"/>
    </location>
    <ligand>
        <name>GTP</name>
        <dbReference type="ChEBI" id="CHEBI:37565"/>
    </ligand>
</feature>
<feature type="binding site" evidence="1">
    <location>
        <position position="34"/>
    </location>
    <ligand>
        <name>GTP</name>
        <dbReference type="ChEBI" id="CHEBI:37565"/>
    </ligand>
</feature>
<feature type="binding site" evidence="1">
    <location>
        <position position="35"/>
    </location>
    <ligand>
        <name>GTP</name>
        <dbReference type="ChEBI" id="CHEBI:37565"/>
    </ligand>
</feature>
<feature type="binding site" evidence="1">
    <location>
        <position position="35"/>
    </location>
    <ligand>
        <name>Mg(2+)</name>
        <dbReference type="ChEBI" id="CHEBI:18420"/>
    </ligand>
</feature>
<feature type="binding site" evidence="1">
    <location>
        <position position="36"/>
    </location>
    <ligand>
        <name>GTP</name>
        <dbReference type="ChEBI" id="CHEBI:37565"/>
    </ligand>
</feature>
<feature type="binding site" evidence="1">
    <location>
        <position position="47"/>
    </location>
    <ligand>
        <name>GTP</name>
        <dbReference type="ChEBI" id="CHEBI:37565"/>
    </ligand>
</feature>
<feature type="binding site" evidence="1">
    <location>
        <position position="48"/>
    </location>
    <ligand>
        <name>GTP</name>
        <dbReference type="ChEBI" id="CHEBI:37565"/>
    </ligand>
</feature>
<feature type="binding site" evidence="1">
    <location>
        <position position="53"/>
    </location>
    <ligand>
        <name>GTP</name>
        <dbReference type="ChEBI" id="CHEBI:37565"/>
    </ligand>
</feature>
<feature type="binding site" evidence="1">
    <location>
        <position position="53"/>
    </location>
    <ligand>
        <name>Mg(2+)</name>
        <dbReference type="ChEBI" id="CHEBI:18420"/>
    </ligand>
</feature>
<feature type="binding site" evidence="1">
    <location>
        <position position="79"/>
    </location>
    <ligand>
        <name>GTP</name>
        <dbReference type="ChEBI" id="CHEBI:37565"/>
    </ligand>
</feature>
<feature type="binding site" evidence="1">
    <location>
        <position position="134"/>
    </location>
    <ligand>
        <name>GTP</name>
        <dbReference type="ChEBI" id="CHEBI:37565"/>
    </ligand>
</feature>
<feature type="binding site" evidence="1">
    <location>
        <position position="135"/>
    </location>
    <ligand>
        <name>GTP</name>
        <dbReference type="ChEBI" id="CHEBI:37565"/>
    </ligand>
</feature>
<feature type="binding site" evidence="1">
    <location>
        <position position="137"/>
    </location>
    <ligand>
        <name>GTP</name>
        <dbReference type="ChEBI" id="CHEBI:37565"/>
    </ligand>
</feature>
<feature type="binding site" evidence="1">
    <location>
        <position position="165"/>
    </location>
    <ligand>
        <name>GTP</name>
        <dbReference type="ChEBI" id="CHEBI:37565"/>
    </ligand>
</feature>
<feature type="binding site" evidence="1">
    <location>
        <position position="166"/>
    </location>
    <ligand>
        <name>GTP</name>
        <dbReference type="ChEBI" id="CHEBI:37565"/>
    </ligand>
</feature>
<feature type="modified residue" description="Phosphoserine" evidence="2">
    <location>
        <position position="85"/>
    </location>
</feature>
<feature type="lipid moiety-binding region" description="S-geranylgeranyl cysteine" evidence="1">
    <location>
        <position position="213"/>
    </location>
</feature>
<feature type="lipid moiety-binding region" description="S-geranylgeranyl cysteine" evidence="1">
    <location>
        <position position="214"/>
    </location>
</feature>
<gene>
    <name type="primary">RAB5C</name>
</gene>
<protein>
    <recommendedName>
        <fullName>Ras-related protein Rab-5C</fullName>
        <ecNumber evidence="1">3.6.5.2</ecNumber>
    </recommendedName>
</protein>
<comment type="function">
    <text evidence="1">The small GTPases Rab are key regulators of intracellular membrane trafficking, from the formation of transport vesicles to their fusion with membranes. Rabs cycle between an inactive GDP-bound form and an active GTP-bound form that is able to recruit to membranes different sets of downstream effectors directly responsible for vesicle formation, movement, tethering and fusion.</text>
</comment>
<comment type="catalytic activity">
    <reaction evidence="1">
        <text>GTP + H2O = GDP + phosphate + H(+)</text>
        <dbReference type="Rhea" id="RHEA:19669"/>
        <dbReference type="ChEBI" id="CHEBI:15377"/>
        <dbReference type="ChEBI" id="CHEBI:15378"/>
        <dbReference type="ChEBI" id="CHEBI:37565"/>
        <dbReference type="ChEBI" id="CHEBI:43474"/>
        <dbReference type="ChEBI" id="CHEBI:58189"/>
        <dbReference type="EC" id="3.6.5.2"/>
    </reaction>
    <physiologicalReaction direction="left-to-right" evidence="1">
        <dbReference type="Rhea" id="RHEA:19670"/>
    </physiologicalReaction>
</comment>
<comment type="cofactor">
    <cofactor evidence="1">
        <name>Mg(2+)</name>
        <dbReference type="ChEBI" id="CHEBI:18420"/>
    </cofactor>
</comment>
<comment type="activity regulation">
    <text evidence="4">Regulated by guanine nucleotide exchange factors (GEFs) which promote the exchange of bound GDP for free GTP (Probable). Regulated by GTPase activating proteins (GAPs) which increase the GTP hydrolysis activity (Probable). Inhibited by GDP dissociation inhibitors (GDIs) (Probable).</text>
</comment>
<comment type="subunit">
    <text evidence="2">Interacts with EEA1 and INCA1 (By similarity). Interacts with GDI1, GDI2, CHML and CHM; phosphorylation at Ser-85 disrupts this interaction (By similarity).</text>
</comment>
<comment type="subcellular location">
    <subcellularLocation>
        <location evidence="1">Cell membrane</location>
        <topology evidence="1">Lipid-anchor</topology>
        <orientation evidence="1">Cytoplasmic side</orientation>
    </subcellularLocation>
    <subcellularLocation>
        <location evidence="1">Early endosome membrane</location>
        <topology evidence="1">Lipid-anchor</topology>
    </subcellularLocation>
    <subcellularLocation>
        <location evidence="2">Melanosome</location>
    </subcellularLocation>
</comment>
<comment type="domain">
    <text evidence="1">Switch 1, switch 2 and the interswitch regions are characteristic of Rab GTPases and mediate the interactions with Rab downstream effectors. The switch regions undergo conformational changes upon nucleotide binding which drive interaction with specific sets of effector proteins, with most effectors only binding to GTP-bound Rab.</text>
</comment>
<comment type="PTM">
    <text evidence="2">Phosphorylation of Ser-85 in the switch II region by LRRK2 prevents the association of RAB regulatory proteins, including CHM, CHML and RAB GDP dissociation inhibitors GDI1 and GDI2.</text>
</comment>
<comment type="similarity">
    <text evidence="4">Belongs to the small GTPase superfamily. Rab family.</text>
</comment>
<proteinExistence type="evidence at transcript level"/>
<evidence type="ECO:0000250" key="1">
    <source>
        <dbReference type="UniProtKB" id="P20339"/>
    </source>
</evidence>
<evidence type="ECO:0000250" key="2">
    <source>
        <dbReference type="UniProtKB" id="P51148"/>
    </source>
</evidence>
<evidence type="ECO:0000256" key="3">
    <source>
        <dbReference type="SAM" id="MobiDB-lite"/>
    </source>
</evidence>
<evidence type="ECO:0000305" key="4"/>